<name>MER11_EUPRA</name>
<feature type="peptide" id="PRO_0000044736" description="Mating pheromone Er-11">
    <location>
        <begin position="1"/>
        <end position="39"/>
    </location>
</feature>
<feature type="disulfide bond">
    <location>
        <begin position="3"/>
        <end position="19"/>
    </location>
</feature>
<feature type="disulfide bond">
    <location>
        <begin position="10"/>
        <end position="34"/>
    </location>
</feature>
<feature type="disulfide bond">
    <location>
        <begin position="15"/>
        <end position="26"/>
    </location>
</feature>
<feature type="helix" evidence="2">
    <location>
        <begin position="2"/>
        <end position="8"/>
    </location>
</feature>
<feature type="helix" evidence="2">
    <location>
        <begin position="12"/>
        <end position="18"/>
    </location>
</feature>
<feature type="helix" evidence="2">
    <location>
        <begin position="20"/>
        <end position="22"/>
    </location>
</feature>
<feature type="helix" evidence="2">
    <location>
        <begin position="23"/>
        <end position="33"/>
    </location>
</feature>
<reference key="1">
    <citation type="journal article" date="1992" name="Proc. Natl. Acad. Sci. U.S.A.">
        <title>Primary structure of Euplotes raikovi pheromones: comparison of five sequences of pheromones from cells with variable mating interactions.</title>
        <authorList>
            <person name="Raffioni S."/>
            <person name="Miceli C."/>
            <person name="Vallesi A."/>
            <person name="Chowdhury S.K."/>
            <person name="Chait B.T."/>
            <person name="Luporini P."/>
            <person name="Bradshaw R.A."/>
        </authorList>
    </citation>
    <scope>PROTEIN SEQUENCE</scope>
    <source>
        <strain>13</strain>
    </source>
</reference>
<reference key="2">
    <citation type="journal article" date="1996" name="Protein Sci.">
        <title>The NMR solution structure of the pheromone Er-11 from the ciliated protozoan Euplotes raikovi.</title>
        <authorList>
            <person name="Luginbuhl P."/>
            <person name="Wu J."/>
            <person name="Zerbe O."/>
            <person name="Ortenzi C."/>
            <person name="Luporini P."/>
            <person name="Wuethrich K."/>
        </authorList>
    </citation>
    <scope>STRUCTURE BY NMR</scope>
</reference>
<gene>
    <name type="primary">MAT11</name>
</gene>
<evidence type="ECO:0000305" key="1"/>
<evidence type="ECO:0007829" key="2">
    <source>
        <dbReference type="PDB" id="1ERY"/>
    </source>
</evidence>
<accession>P26887</accession>
<comment type="function">
    <text>Mating ciliate pheromones (or gamones) are diffusible extracellular communication signals that distinguish different intraspecific classes of cells commonly referred to as 'mating types'. They prepare the latter for conjugation by changing their cell surface properties.</text>
</comment>
<comment type="subunit">
    <text evidence="1">Homodimer.</text>
</comment>
<comment type="subcellular location">
    <subcellularLocation>
        <location>Secreted</location>
    </subcellularLocation>
</comment>
<sequence>DECANAAAQCSITLCNLYCGPLIEICELTVMQNCEPPFS</sequence>
<dbReference type="PIR" id="B41933">
    <property type="entry name" value="B41933"/>
</dbReference>
<dbReference type="PDB" id="1ERY">
    <property type="method" value="NMR"/>
    <property type="chains" value="A=1-39"/>
</dbReference>
<dbReference type="PDBsum" id="1ERY"/>
<dbReference type="SMR" id="P26887"/>
<dbReference type="EvolutionaryTrace" id="P26887"/>
<dbReference type="GO" id="GO:0005576">
    <property type="term" value="C:extracellular region"/>
    <property type="evidence" value="ECO:0007669"/>
    <property type="project" value="UniProtKB-SubCell"/>
</dbReference>
<dbReference type="GO" id="GO:0005186">
    <property type="term" value="F:pheromone activity"/>
    <property type="evidence" value="ECO:0007669"/>
    <property type="project" value="UniProtKB-KW"/>
</dbReference>
<dbReference type="InterPro" id="IPR009064">
    <property type="entry name" value="Pheromone_protoz"/>
</dbReference>
<dbReference type="InterPro" id="IPR036245">
    <property type="entry name" value="Pheromone_protoz_sf"/>
</dbReference>
<dbReference type="Pfam" id="PF06360">
    <property type="entry name" value="E_raikovi_mat"/>
    <property type="match status" value="1"/>
</dbReference>
<dbReference type="SUPFAM" id="SSF47014">
    <property type="entry name" value="Protozoan pheromone proteins"/>
    <property type="match status" value="1"/>
</dbReference>
<proteinExistence type="evidence at protein level"/>
<organism>
    <name type="scientific">Euplotes raikovi</name>
    <dbReference type="NCBI Taxonomy" id="5938"/>
    <lineage>
        <taxon>Eukaryota</taxon>
        <taxon>Sar</taxon>
        <taxon>Alveolata</taxon>
        <taxon>Ciliophora</taxon>
        <taxon>Intramacronucleata</taxon>
        <taxon>Spirotrichea</taxon>
        <taxon>Hypotrichia</taxon>
        <taxon>Euplotida</taxon>
        <taxon>Euplotidae</taxon>
        <taxon>Euplotes</taxon>
    </lineage>
</organism>
<protein>
    <recommendedName>
        <fullName>Mating pheromone Er-11</fullName>
    </recommendedName>
    <alternativeName>
        <fullName>Euplomone R11</fullName>
    </alternativeName>
</protein>
<keyword id="KW-0002">3D-structure</keyword>
<keyword id="KW-0903">Direct protein sequencing</keyword>
<keyword id="KW-1015">Disulfide bond</keyword>
<keyword id="KW-0588">Pheromone</keyword>
<keyword id="KW-0964">Secreted</keyword>